<name>TNR21_MOUSE</name>
<dbReference type="EMBL" id="AF322069">
    <property type="protein sequence ID" value="AAG38115.1"/>
    <property type="molecule type" value="mRNA"/>
</dbReference>
<dbReference type="EMBL" id="AY043489">
    <property type="protein sequence ID" value="AAK74193.1"/>
    <property type="molecule type" value="mRNA"/>
</dbReference>
<dbReference type="EMBL" id="AK043823">
    <property type="protein sequence ID" value="BAC31664.1"/>
    <property type="molecule type" value="mRNA"/>
</dbReference>
<dbReference type="EMBL" id="AK134704">
    <property type="protein sequence ID" value="BAE22249.1"/>
    <property type="molecule type" value="mRNA"/>
</dbReference>
<dbReference type="EMBL" id="BC016420">
    <property type="protein sequence ID" value="AAH16420.1"/>
    <property type="molecule type" value="mRNA"/>
</dbReference>
<dbReference type="CCDS" id="CCDS28794.1"/>
<dbReference type="RefSeq" id="NP_848704.1">
    <property type="nucleotide sequence ID" value="NM_178589.3"/>
</dbReference>
<dbReference type="PDB" id="4YN0">
    <property type="method" value="X-ray"/>
    <property type="resolution" value="2.20 A"/>
    <property type="chains" value="A=42-220"/>
</dbReference>
<dbReference type="PDBsum" id="4YN0"/>
<dbReference type="SMR" id="Q9EPU5"/>
<dbReference type="BioGRID" id="220463">
    <property type="interactions" value="3"/>
</dbReference>
<dbReference type="DIP" id="DIP-59733N"/>
<dbReference type="FunCoup" id="Q9EPU5">
    <property type="interactions" value="1172"/>
</dbReference>
<dbReference type="IntAct" id="Q9EPU5">
    <property type="interactions" value="2"/>
</dbReference>
<dbReference type="STRING" id="10090.ENSMUSP00000024708"/>
<dbReference type="GlyCosmos" id="Q9EPU5">
    <property type="glycosylation" value="6 sites, No reported glycans"/>
</dbReference>
<dbReference type="GlyGen" id="Q9EPU5">
    <property type="glycosylation" value="7 sites, 3 N-linked glycans (3 sites)"/>
</dbReference>
<dbReference type="iPTMnet" id="Q9EPU5"/>
<dbReference type="PhosphoSitePlus" id="Q9EPU5"/>
<dbReference type="SwissPalm" id="Q9EPU5"/>
<dbReference type="PaxDb" id="10090-ENSMUSP00000024708"/>
<dbReference type="ProteomicsDB" id="260642"/>
<dbReference type="Antibodypedia" id="1463">
    <property type="antibodies" value="654 antibodies from 40 providers"/>
</dbReference>
<dbReference type="DNASU" id="94185"/>
<dbReference type="Ensembl" id="ENSMUST00000024708.6">
    <property type="protein sequence ID" value="ENSMUSP00000024708.5"/>
    <property type="gene ID" value="ENSMUSG00000023915.6"/>
</dbReference>
<dbReference type="GeneID" id="94185"/>
<dbReference type="KEGG" id="mmu:94185"/>
<dbReference type="UCSC" id="uc008cov.1">
    <property type="organism name" value="mouse"/>
</dbReference>
<dbReference type="AGR" id="MGI:2151075"/>
<dbReference type="CTD" id="27242"/>
<dbReference type="MGI" id="MGI:2151075">
    <property type="gene designation" value="Tnfrsf21"/>
</dbReference>
<dbReference type="VEuPathDB" id="HostDB:ENSMUSG00000023915"/>
<dbReference type="eggNOG" id="ENOG502QVMX">
    <property type="taxonomic scope" value="Eukaryota"/>
</dbReference>
<dbReference type="GeneTree" id="ENSGT00940000156212"/>
<dbReference type="HOGENOM" id="CLU_027496_0_0_1"/>
<dbReference type="InParanoid" id="Q9EPU5"/>
<dbReference type="OMA" id="QVGTQWI"/>
<dbReference type="OrthoDB" id="8933063at2759"/>
<dbReference type="PhylomeDB" id="Q9EPU5"/>
<dbReference type="TreeFam" id="TF331157"/>
<dbReference type="BioGRID-ORCS" id="94185">
    <property type="hits" value="1 hit in 76 CRISPR screens"/>
</dbReference>
<dbReference type="ChiTaRS" id="Tnfrsf21">
    <property type="organism name" value="mouse"/>
</dbReference>
<dbReference type="EvolutionaryTrace" id="Q9EPU5"/>
<dbReference type="PRO" id="PR:Q9EPU5"/>
<dbReference type="Proteomes" id="UP000000589">
    <property type="component" value="Chromosome 17"/>
</dbReference>
<dbReference type="RNAct" id="Q9EPU5">
    <property type="molecule type" value="protein"/>
</dbReference>
<dbReference type="Bgee" id="ENSMUSG00000023915">
    <property type="expression patterns" value="Expressed in right kidney and 257 other cell types or tissues"/>
</dbReference>
<dbReference type="GO" id="GO:0005886">
    <property type="term" value="C:plasma membrane"/>
    <property type="evidence" value="ECO:0000314"/>
    <property type="project" value="UniProtKB"/>
</dbReference>
<dbReference type="GO" id="GO:0002250">
    <property type="term" value="P:adaptive immune response"/>
    <property type="evidence" value="ECO:0000315"/>
    <property type="project" value="UniProtKB"/>
</dbReference>
<dbReference type="GO" id="GO:0007413">
    <property type="term" value="P:axonal fasciculation"/>
    <property type="evidence" value="ECO:0007669"/>
    <property type="project" value="Ensembl"/>
</dbReference>
<dbReference type="GO" id="GO:0001783">
    <property type="term" value="P:B cell apoptotic process"/>
    <property type="evidence" value="ECO:0000315"/>
    <property type="project" value="UniProtKB"/>
</dbReference>
<dbReference type="GO" id="GO:0071356">
    <property type="term" value="P:cellular response to tumor necrosis factor"/>
    <property type="evidence" value="ECO:0007669"/>
    <property type="project" value="Ensembl"/>
</dbReference>
<dbReference type="GO" id="GO:0006959">
    <property type="term" value="P:humoral immune response"/>
    <property type="evidence" value="ECO:0000315"/>
    <property type="project" value="UniProtKB"/>
</dbReference>
<dbReference type="GO" id="GO:0042552">
    <property type="term" value="P:myelination"/>
    <property type="evidence" value="ECO:0000315"/>
    <property type="project" value="UniProtKB"/>
</dbReference>
<dbReference type="GO" id="GO:0030889">
    <property type="term" value="P:negative regulation of B cell proliferation"/>
    <property type="evidence" value="ECO:0000315"/>
    <property type="project" value="UniProtKB"/>
</dbReference>
<dbReference type="GO" id="GO:0032693">
    <property type="term" value="P:negative regulation of interleukin-10 production"/>
    <property type="evidence" value="ECO:0000315"/>
    <property type="project" value="UniProtKB"/>
</dbReference>
<dbReference type="GO" id="GO:0032696">
    <property type="term" value="P:negative regulation of interleukin-13 production"/>
    <property type="evidence" value="ECO:0000315"/>
    <property type="project" value="UniProtKB"/>
</dbReference>
<dbReference type="GO" id="GO:0032714">
    <property type="term" value="P:negative regulation of interleukin-5 production"/>
    <property type="evidence" value="ECO:0000315"/>
    <property type="project" value="UniProtKB"/>
</dbReference>
<dbReference type="GO" id="GO:0031642">
    <property type="term" value="P:negative regulation of myelination"/>
    <property type="evidence" value="ECO:0007669"/>
    <property type="project" value="Ensembl"/>
</dbReference>
<dbReference type="GO" id="GO:0042130">
    <property type="term" value="P:negative regulation of T cell proliferation"/>
    <property type="evidence" value="ECO:0000315"/>
    <property type="project" value="UniProtKB"/>
</dbReference>
<dbReference type="GO" id="GO:0051402">
    <property type="term" value="P:neuron apoptotic process"/>
    <property type="evidence" value="ECO:0000315"/>
    <property type="project" value="UniProtKB"/>
</dbReference>
<dbReference type="GO" id="GO:0097252">
    <property type="term" value="P:oligodendrocyte apoptotic process"/>
    <property type="evidence" value="ECO:0000315"/>
    <property type="project" value="UniProtKB"/>
</dbReference>
<dbReference type="GO" id="GO:0048713">
    <property type="term" value="P:regulation of oligodendrocyte differentiation"/>
    <property type="evidence" value="ECO:0000315"/>
    <property type="project" value="UniProtKB"/>
</dbReference>
<dbReference type="GO" id="GO:0050852">
    <property type="term" value="P:T cell receptor signaling pathway"/>
    <property type="evidence" value="ECO:0000315"/>
    <property type="project" value="UniProtKB"/>
</dbReference>
<dbReference type="CDD" id="cd01671">
    <property type="entry name" value="CARD"/>
    <property type="match status" value="1"/>
</dbReference>
<dbReference type="CDD" id="cd08778">
    <property type="entry name" value="Death_TNFRSF21"/>
    <property type="match status" value="1"/>
</dbReference>
<dbReference type="CDD" id="cd10583">
    <property type="entry name" value="TNFRSF21"/>
    <property type="match status" value="1"/>
</dbReference>
<dbReference type="FunFam" id="1.10.533.10:FF:000005">
    <property type="entry name" value="Tumor necrosis factor receptor superfamily member 21"/>
    <property type="match status" value="1"/>
</dbReference>
<dbReference type="FunFam" id="2.10.50.10:FF:000010">
    <property type="entry name" value="Tumor necrosis factor receptor superfamily member 21"/>
    <property type="match status" value="1"/>
</dbReference>
<dbReference type="FunFam" id="2.10.50.10:FF:000011">
    <property type="entry name" value="Tumor necrosis factor receptor superfamily member 21"/>
    <property type="match status" value="1"/>
</dbReference>
<dbReference type="FunFam" id="1.10.533.10:FF:000009">
    <property type="entry name" value="tumor necrosis factor receptor superfamily member 21"/>
    <property type="match status" value="1"/>
</dbReference>
<dbReference type="Gene3D" id="1.10.533.10">
    <property type="entry name" value="Death Domain, Fas"/>
    <property type="match status" value="2"/>
</dbReference>
<dbReference type="Gene3D" id="2.10.50.10">
    <property type="entry name" value="Tumor Necrosis Factor Receptor, subunit A, domain 2"/>
    <property type="match status" value="2"/>
</dbReference>
<dbReference type="InterPro" id="IPR011029">
    <property type="entry name" value="DEATH-like_dom_sf"/>
</dbReference>
<dbReference type="InterPro" id="IPR000488">
    <property type="entry name" value="Death_dom"/>
</dbReference>
<dbReference type="InterPro" id="IPR001368">
    <property type="entry name" value="TNFR/NGFR_Cys_rich_reg"/>
</dbReference>
<dbReference type="InterPro" id="IPR022330">
    <property type="entry name" value="TNFR_21"/>
</dbReference>
<dbReference type="InterPro" id="IPR034037">
    <property type="entry name" value="TNFRSF21_death"/>
</dbReference>
<dbReference type="InterPro" id="IPR034034">
    <property type="entry name" value="TNFRSF21_N"/>
</dbReference>
<dbReference type="PANTHER" id="PTHR46921">
    <property type="entry name" value="TUMOR NECROSIS FACTOR RECEPTOR SUPERFAMILY MEMBER 21"/>
    <property type="match status" value="1"/>
</dbReference>
<dbReference type="PANTHER" id="PTHR46921:SF1">
    <property type="entry name" value="TUMOR NECROSIS FACTOR RECEPTOR SUPERFAMILY MEMBER 21"/>
    <property type="match status" value="1"/>
</dbReference>
<dbReference type="Pfam" id="PF00531">
    <property type="entry name" value="Death"/>
    <property type="match status" value="1"/>
</dbReference>
<dbReference type="Pfam" id="PF00020">
    <property type="entry name" value="TNFR_c6"/>
    <property type="match status" value="2"/>
</dbReference>
<dbReference type="PRINTS" id="PR01971">
    <property type="entry name" value="TNFACTORR21"/>
</dbReference>
<dbReference type="SMART" id="SM00005">
    <property type="entry name" value="DEATH"/>
    <property type="match status" value="1"/>
</dbReference>
<dbReference type="SMART" id="SM01411">
    <property type="entry name" value="Ephrin_rec_like"/>
    <property type="match status" value="2"/>
</dbReference>
<dbReference type="SMART" id="SM00208">
    <property type="entry name" value="TNFR"/>
    <property type="match status" value="4"/>
</dbReference>
<dbReference type="SUPFAM" id="SSF47986">
    <property type="entry name" value="DEATH domain"/>
    <property type="match status" value="1"/>
</dbReference>
<dbReference type="SUPFAM" id="SSF57586">
    <property type="entry name" value="TNF receptor-like"/>
    <property type="match status" value="2"/>
</dbReference>
<dbReference type="PROSITE" id="PS50017">
    <property type="entry name" value="DEATH_DOMAIN"/>
    <property type="match status" value="1"/>
</dbReference>
<dbReference type="PROSITE" id="PS00652">
    <property type="entry name" value="TNFR_NGFR_1"/>
    <property type="match status" value="1"/>
</dbReference>
<dbReference type="PROSITE" id="PS50050">
    <property type="entry name" value="TNFR_NGFR_2"/>
    <property type="match status" value="1"/>
</dbReference>
<evidence type="ECO:0000250" key="1"/>
<evidence type="ECO:0000250" key="2">
    <source>
        <dbReference type="UniProtKB" id="O75509"/>
    </source>
</evidence>
<evidence type="ECO:0000255" key="3"/>
<evidence type="ECO:0000255" key="4">
    <source>
        <dbReference type="PROSITE-ProRule" id="PRU00064"/>
    </source>
</evidence>
<evidence type="ECO:0000255" key="5">
    <source>
        <dbReference type="PROSITE-ProRule" id="PRU00206"/>
    </source>
</evidence>
<evidence type="ECO:0000256" key="6">
    <source>
        <dbReference type="SAM" id="MobiDB-lite"/>
    </source>
</evidence>
<evidence type="ECO:0000269" key="7">
    <source>
    </source>
</evidence>
<evidence type="ECO:0000269" key="8">
    <source>
    </source>
</evidence>
<evidence type="ECO:0000269" key="9">
    <source>
    </source>
</evidence>
<evidence type="ECO:0000269" key="10">
    <source>
    </source>
</evidence>
<evidence type="ECO:0000269" key="11">
    <source>
    </source>
</evidence>
<evidence type="ECO:0000305" key="12"/>
<evidence type="ECO:0000305" key="13">
    <source>
    </source>
</evidence>
<evidence type="ECO:0000305" key="14">
    <source>
    </source>
</evidence>
<evidence type="ECO:0007829" key="15">
    <source>
        <dbReference type="PDB" id="4YN0"/>
    </source>
</evidence>
<gene>
    <name type="primary">Tnfrsf21</name>
    <name type="synonym">Dr6</name>
</gene>
<organism>
    <name type="scientific">Mus musculus</name>
    <name type="common">Mouse</name>
    <dbReference type="NCBI Taxonomy" id="10090"/>
    <lineage>
        <taxon>Eukaryota</taxon>
        <taxon>Metazoa</taxon>
        <taxon>Chordata</taxon>
        <taxon>Craniata</taxon>
        <taxon>Vertebrata</taxon>
        <taxon>Euteleostomi</taxon>
        <taxon>Mammalia</taxon>
        <taxon>Eutheria</taxon>
        <taxon>Euarchontoglires</taxon>
        <taxon>Glires</taxon>
        <taxon>Rodentia</taxon>
        <taxon>Myomorpha</taxon>
        <taxon>Muroidea</taxon>
        <taxon>Muridae</taxon>
        <taxon>Murinae</taxon>
        <taxon>Mus</taxon>
        <taxon>Mus</taxon>
    </lineage>
</organism>
<sequence>MGTRASSITALASCSRTAGQVGATMVAGSLLLLGFLSTITAQPEQKTLSLPGTYRHVDRTTGQVLTCDKCPAGTYVSEHCTNMSLRVCSSCPAGTFTRHENGIERCHDCSQPCPWPMIERLPCAALTDRECICPPGMYQSNGTCAPHTVCPVGWGVRKKGTENEDVRCKQCARGTFSDVPSSVMKCKAHTDCLGQNLEVVKPGTKETDNVCGMRLFFSSTNPPSSGTVTFSHPEHMESHDVPSSTYEPQGMNSTDSNSTASVRTKVPSGIEEGTVPDNTSSTSGKEGTNRTLPNPPQVTHQQAPHHRHILKLLPSSMEATGEKSSTAIKAPKRGHPRQNAHKHFDINEHLPWMIVLFLLLVLVLIVVCSIRKSSRTLKKGPRQDPSAIVEKAGLKKSLTPTQNREKWIYYRNGHGIDILKLVAAQVGSQWKDIYQFLCNASEREVAAFSNGYTADHERAYAALQHWTIRGPEASLAQLISALRQHRRNDVVEKIRGLMEDTTQLETDKLALPMSPSPLSPSPMPSPNVKLENSTLLTVEPSPLDKNKCFFVDESEPLLRCDSTSSGSSALSRNGSFITKEKKDTVLRQVRLDPCDLQPIFDDMLHILNPEELRVIEEIPQAEDKLDRLFEIIGVKSQEASQTLLDSVYSHLPDLL</sequence>
<comment type="function">
    <text evidence="2 7 8 9 10 11">Promotes apoptosis, possibly via a pathway that involves the activation of NF-kappa-B (PubMed:11485735, PubMed:11714751, PubMed:12515813, PubMed:21725297, PubMed:23559013). Can also promote apoptosis mediated by BAX and by the release of cytochrome c from the mitochondria into the cytoplasm (By similarity). Trophic-factor deprivation triggers the cleavage of surface APP by beta-secretase to release sAPP-beta which is further cleaved to release an N-terminal fragment of APP (N-APP) (PubMed:23559013). Negatively regulates oligodendrocyte survival, maturation and myelination (PubMed:21725297). Plays a role in signaling cascades triggered by stimulation of T-cell receptors, in the adaptive immune response and in the regulation of T-cell differentiation and proliferation (By similarity). Negatively regulates T-cell responses and the release of cytokines such as IL4, IL5, IL10, IL13 and IFNG by Th2 cells (By similarity). Negatively regulates the production of IgG, IgM and IgM in response to antigens (By similarity). May inhibit the activation of JNK in response to T-cell stimulation (By similarity). Also acts as a regulator of pyroptosis: recruits CASP8 in response to reactive oxygen species (ROS) and subsequent oxidation, leading to activation of GSDMC (By similarity).</text>
</comment>
<comment type="subunit">
    <text evidence="2">Associates with TRADD (By similarity). Interacts with NGFR. Interacts with CASP8 (By similarity).</text>
</comment>
<comment type="subcellular location">
    <subcellularLocation>
        <location evidence="9">Cell membrane</location>
        <topology evidence="9">Single-pass type I membrane protein</topology>
    </subcellularLocation>
    <text evidence="2">Endocytosed following oxidation in response to reactive oxygen species (ROS).</text>
</comment>
<comment type="tissue specificity">
    <text evidence="7 8 9">Detected in spleen B-cells (at protein level). Ubiquitous. Highly expressed in adult spleen, thymus, testis, prostate, ovary, small intestine, colon, brain, lung and kidney, and in fetal brain, liver and lung. Detected at lower levels in adult peripheral blood leukocytes, lung, and in fetal muscle, heart, kidney, small intestine and skin. Detected in T-cells, B-cells and monocytes. In T-cells expression is highest in Th0 cells, intermediate in Th2 cells and lower in Th1 cells. Expressed at low levels in proliferating progenitors in the spinal cord, but is highly expressed by differentiating neurons within the spinal cord and adjacent dorsal root ganglia.</text>
</comment>
<comment type="PTM">
    <text evidence="2">Oxidized in response to reactive oxygen species (ROS), leading to endocytosis.</text>
</comment>
<comment type="disruption phenotype">
    <text evidence="7 8 9 10 11">No visible phenotype. Mice are born at the expected Mendelian rate, are viable and fertile. Mutant mice display an increased number of T-cells in the peripheral blood, but only a minor increase of the number of T-cells in spleen and thymus. T-cells from mutant mice show increased proliferative responses to antigens and produce higher levels of IL4, IL5, IL10, IL13 and IFNG. Mutant mice have normal serum levels of IgG and IgM in the absence of antigen, but produce higher levels of IgG, IgM and IgM in response to antigens. Likewise, B-cells from mutant mice display increased proliferation and decreased apoptosis in response to antigens. Mutant mice show increased levels of mature oligodendrocytes, decreased levels of apoptotic oligodendrocytes and increased myelination. Mutant mice are not susceptible to neuronal apoptosis triggered by exposure to amyloid peptides derived from APP.</text>
</comment>
<comment type="caution">
    <text evidence="13 14">Was reported to play a role in neuronal apoptosis, including apoptosis in response to amyloid peptides derived from APP, and to be required for both normal cell body death and axonal pruning. Was also reported to bind N-APP triggering caspase activation and degeneration of both neuronal cell bodies (via caspase-3) and axons (via caspase-6) (PubMed:19225519). This work was later retracted (PubMed:38110576).</text>
</comment>
<comment type="caution">
    <text evidence="12">It is uncertain whether Met-1 or Met-25 is the initiator.</text>
</comment>
<keyword id="KW-0002">3D-structure</keyword>
<keyword id="KW-1064">Adaptive immunity</keyword>
<keyword id="KW-0053">Apoptosis</keyword>
<keyword id="KW-1003">Cell membrane</keyword>
<keyword id="KW-1015">Disulfide bond</keyword>
<keyword id="KW-0325">Glycoprotein</keyword>
<keyword id="KW-0391">Immunity</keyword>
<keyword id="KW-0449">Lipoprotein</keyword>
<keyword id="KW-0472">Membrane</keyword>
<keyword id="KW-0558">Oxidation</keyword>
<keyword id="KW-0564">Palmitate</keyword>
<keyword id="KW-0675">Receptor</keyword>
<keyword id="KW-1185">Reference proteome</keyword>
<keyword id="KW-0677">Repeat</keyword>
<keyword id="KW-0732">Signal</keyword>
<keyword id="KW-0812">Transmembrane</keyword>
<keyword id="KW-1133">Transmembrane helix</keyword>
<reference key="1">
    <citation type="submission" date="2000-11" db="EMBL/GenBank/DDBJ databases">
        <title>Mouse DR6: mouse homolog of human TNFR-related death receptor-6 (DR6).</title>
        <authorList>
            <person name="Isogai D."/>
            <person name="Ichino M."/>
            <person name="Yoshinari M."/>
            <person name="Yamaura A."/>
            <person name="Kurokawa F."/>
            <person name="Minami M."/>
        </authorList>
    </citation>
    <scope>NUCLEOTIDE SEQUENCE [MRNA]</scope>
    <source>
        <strain>C57BL/6J</strain>
        <tissue>Kidney</tissue>
    </source>
</reference>
<reference key="2">
    <citation type="submission" date="2001-07" db="EMBL/GenBank/DDBJ databases">
        <title>Murine DR6: murine TNFR-related death receptor-6.</title>
        <authorList>
            <person name="Kim V."/>
            <person name="Machleidt T."/>
            <person name="Shi W.-X."/>
            <person name="Wang X."/>
            <person name="Cai Z."/>
        </authorList>
    </citation>
    <scope>NUCLEOTIDE SEQUENCE [MRNA]</scope>
    <source>
        <strain>BALB/cJ</strain>
        <tissue>Kidney</tissue>
    </source>
</reference>
<reference key="3">
    <citation type="journal article" date="2005" name="Science">
        <title>The transcriptional landscape of the mammalian genome.</title>
        <authorList>
            <person name="Carninci P."/>
            <person name="Kasukawa T."/>
            <person name="Katayama S."/>
            <person name="Gough J."/>
            <person name="Frith M.C."/>
            <person name="Maeda N."/>
            <person name="Oyama R."/>
            <person name="Ravasi T."/>
            <person name="Lenhard B."/>
            <person name="Wells C."/>
            <person name="Kodzius R."/>
            <person name="Shimokawa K."/>
            <person name="Bajic V.B."/>
            <person name="Brenner S.E."/>
            <person name="Batalov S."/>
            <person name="Forrest A.R."/>
            <person name="Zavolan M."/>
            <person name="Davis M.J."/>
            <person name="Wilming L.G."/>
            <person name="Aidinis V."/>
            <person name="Allen J.E."/>
            <person name="Ambesi-Impiombato A."/>
            <person name="Apweiler R."/>
            <person name="Aturaliya R.N."/>
            <person name="Bailey T.L."/>
            <person name="Bansal M."/>
            <person name="Baxter L."/>
            <person name="Beisel K.W."/>
            <person name="Bersano T."/>
            <person name="Bono H."/>
            <person name="Chalk A.M."/>
            <person name="Chiu K.P."/>
            <person name="Choudhary V."/>
            <person name="Christoffels A."/>
            <person name="Clutterbuck D.R."/>
            <person name="Crowe M.L."/>
            <person name="Dalla E."/>
            <person name="Dalrymple B.P."/>
            <person name="de Bono B."/>
            <person name="Della Gatta G."/>
            <person name="di Bernardo D."/>
            <person name="Down T."/>
            <person name="Engstrom P."/>
            <person name="Fagiolini M."/>
            <person name="Faulkner G."/>
            <person name="Fletcher C.F."/>
            <person name="Fukushima T."/>
            <person name="Furuno M."/>
            <person name="Futaki S."/>
            <person name="Gariboldi M."/>
            <person name="Georgii-Hemming P."/>
            <person name="Gingeras T.R."/>
            <person name="Gojobori T."/>
            <person name="Green R.E."/>
            <person name="Gustincich S."/>
            <person name="Harbers M."/>
            <person name="Hayashi Y."/>
            <person name="Hensch T.K."/>
            <person name="Hirokawa N."/>
            <person name="Hill D."/>
            <person name="Huminiecki L."/>
            <person name="Iacono M."/>
            <person name="Ikeo K."/>
            <person name="Iwama A."/>
            <person name="Ishikawa T."/>
            <person name="Jakt M."/>
            <person name="Kanapin A."/>
            <person name="Katoh M."/>
            <person name="Kawasawa Y."/>
            <person name="Kelso J."/>
            <person name="Kitamura H."/>
            <person name="Kitano H."/>
            <person name="Kollias G."/>
            <person name="Krishnan S.P."/>
            <person name="Kruger A."/>
            <person name="Kummerfeld S.K."/>
            <person name="Kurochkin I.V."/>
            <person name="Lareau L.F."/>
            <person name="Lazarevic D."/>
            <person name="Lipovich L."/>
            <person name="Liu J."/>
            <person name="Liuni S."/>
            <person name="McWilliam S."/>
            <person name="Madan Babu M."/>
            <person name="Madera M."/>
            <person name="Marchionni L."/>
            <person name="Matsuda H."/>
            <person name="Matsuzawa S."/>
            <person name="Miki H."/>
            <person name="Mignone F."/>
            <person name="Miyake S."/>
            <person name="Morris K."/>
            <person name="Mottagui-Tabar S."/>
            <person name="Mulder N."/>
            <person name="Nakano N."/>
            <person name="Nakauchi H."/>
            <person name="Ng P."/>
            <person name="Nilsson R."/>
            <person name="Nishiguchi S."/>
            <person name="Nishikawa S."/>
            <person name="Nori F."/>
            <person name="Ohara O."/>
            <person name="Okazaki Y."/>
            <person name="Orlando V."/>
            <person name="Pang K.C."/>
            <person name="Pavan W.J."/>
            <person name="Pavesi G."/>
            <person name="Pesole G."/>
            <person name="Petrovsky N."/>
            <person name="Piazza S."/>
            <person name="Reed J."/>
            <person name="Reid J.F."/>
            <person name="Ring B.Z."/>
            <person name="Ringwald M."/>
            <person name="Rost B."/>
            <person name="Ruan Y."/>
            <person name="Salzberg S.L."/>
            <person name="Sandelin A."/>
            <person name="Schneider C."/>
            <person name="Schoenbach C."/>
            <person name="Sekiguchi K."/>
            <person name="Semple C.A."/>
            <person name="Seno S."/>
            <person name="Sessa L."/>
            <person name="Sheng Y."/>
            <person name="Shibata Y."/>
            <person name="Shimada H."/>
            <person name="Shimada K."/>
            <person name="Silva D."/>
            <person name="Sinclair B."/>
            <person name="Sperling S."/>
            <person name="Stupka E."/>
            <person name="Sugiura K."/>
            <person name="Sultana R."/>
            <person name="Takenaka Y."/>
            <person name="Taki K."/>
            <person name="Tammoja K."/>
            <person name="Tan S.L."/>
            <person name="Tang S."/>
            <person name="Taylor M.S."/>
            <person name="Tegner J."/>
            <person name="Teichmann S.A."/>
            <person name="Ueda H.R."/>
            <person name="van Nimwegen E."/>
            <person name="Verardo R."/>
            <person name="Wei C.L."/>
            <person name="Yagi K."/>
            <person name="Yamanishi H."/>
            <person name="Zabarovsky E."/>
            <person name="Zhu S."/>
            <person name="Zimmer A."/>
            <person name="Hide W."/>
            <person name="Bult C."/>
            <person name="Grimmond S.M."/>
            <person name="Teasdale R.D."/>
            <person name="Liu E.T."/>
            <person name="Brusic V."/>
            <person name="Quackenbush J."/>
            <person name="Wahlestedt C."/>
            <person name="Mattick J.S."/>
            <person name="Hume D.A."/>
            <person name="Kai C."/>
            <person name="Sasaki D."/>
            <person name="Tomaru Y."/>
            <person name="Fukuda S."/>
            <person name="Kanamori-Katayama M."/>
            <person name="Suzuki M."/>
            <person name="Aoki J."/>
            <person name="Arakawa T."/>
            <person name="Iida J."/>
            <person name="Imamura K."/>
            <person name="Itoh M."/>
            <person name="Kato T."/>
            <person name="Kawaji H."/>
            <person name="Kawagashira N."/>
            <person name="Kawashima T."/>
            <person name="Kojima M."/>
            <person name="Kondo S."/>
            <person name="Konno H."/>
            <person name="Nakano K."/>
            <person name="Ninomiya N."/>
            <person name="Nishio T."/>
            <person name="Okada M."/>
            <person name="Plessy C."/>
            <person name="Shibata K."/>
            <person name="Shiraki T."/>
            <person name="Suzuki S."/>
            <person name="Tagami M."/>
            <person name="Waki K."/>
            <person name="Watahiki A."/>
            <person name="Okamura-Oho Y."/>
            <person name="Suzuki H."/>
            <person name="Kawai J."/>
            <person name="Hayashizaki Y."/>
        </authorList>
    </citation>
    <scope>NUCLEOTIDE SEQUENCE [LARGE SCALE MRNA]</scope>
    <source>
        <strain>C57BL/6J</strain>
        <tissue>Brain cortex</tissue>
        <tissue>Medulla oblongata</tissue>
    </source>
</reference>
<reference key="4">
    <citation type="journal article" date="2004" name="Genome Res.">
        <title>The status, quality, and expansion of the NIH full-length cDNA project: the Mammalian Gene Collection (MGC).</title>
        <authorList>
            <consortium name="The MGC Project Team"/>
        </authorList>
    </citation>
    <scope>NUCLEOTIDE SEQUENCE [LARGE SCALE MRNA]</scope>
    <source>
        <tissue>Kidney</tissue>
    </source>
</reference>
<reference key="5">
    <citation type="journal article" date="2001" name="Immunity">
        <title>Enhanced CD4+ T cell proliferation and Th2 cytokine production in DR6-deficient mice.</title>
        <authorList>
            <person name="Liu J."/>
            <person name="Na S."/>
            <person name="Glasebrook A."/>
            <person name="Fox N."/>
            <person name="Solenberg P.J."/>
            <person name="Zhang Q."/>
            <person name="Song H.Y."/>
            <person name="Yang D.D."/>
        </authorList>
    </citation>
    <scope>FUNCTION</scope>
    <scope>DISRUPTION PHENOTYPE</scope>
    <scope>TISSUE SPECIFICITY</scope>
</reference>
<reference key="6">
    <citation type="journal article" date="2001" name="J. Exp. Med.">
        <title>Impaired c-Jun amino terminal kinase activity and T cell differentiation in death receptor 6-deficient mice.</title>
        <authorList>
            <person name="Zhao H."/>
            <person name="Yan M."/>
            <person name="Wang H."/>
            <person name="Erickson S."/>
            <person name="Grewal I.S."/>
            <person name="Dixit V.M."/>
        </authorList>
    </citation>
    <scope>FUNCTION</scope>
    <scope>DISRUPTION PHENOTYPE</scope>
    <scope>TISSUE SPECIFICITY</scope>
</reference>
<reference key="7">
    <citation type="journal article" date="2003" name="J. Exp. Med.">
        <title>Enhanced B cell expansion, survival, and humoral responses by targeting death receptor 6.</title>
        <authorList>
            <person name="Schmidt C.S."/>
            <person name="Liu J."/>
            <person name="Zhang T."/>
            <person name="Song H.Y."/>
            <person name="Sandusky G."/>
            <person name="Mintze K."/>
            <person name="Benschop R.J."/>
            <person name="Glasebrook A."/>
            <person name="Yang D.D."/>
            <person name="Na S."/>
        </authorList>
    </citation>
    <scope>FUNCTION</scope>
    <scope>DISRUPTION PHENOTYPE</scope>
    <scope>SUBCELLULAR LOCATION</scope>
    <scope>TISSUE SPECIFICITY</scope>
</reference>
<reference key="8">
    <citation type="journal article" date="2009" name="Nature">
        <title>APP binds DR6 to trigger axon pruning and neuron death via distinct caspases.</title>
        <authorList>
            <person name="Nikolaev A."/>
            <person name="McLaughlin T."/>
            <person name="O'Leary D.D.M."/>
            <person name="Tessier-Lavigne M."/>
        </authorList>
    </citation>
    <scope>RETRACTED PAPER</scope>
</reference>
<reference key="9">
    <citation type="journal article" date="2024" name="Nature">
        <title>Retraction Note: APP binds DR6 to trigger axon pruning and neuron death via distinct caspases.</title>
        <authorList>
            <person name="Nikolaev A."/>
            <person name="McLaughlin T."/>
            <person name="O'Leary D.D.M."/>
            <person name="Tessier-Lavigne M."/>
        </authorList>
    </citation>
    <scope>CAUTION</scope>
    <scope>RETRACTION NOTICE OF PUBMED:19225519</scope>
</reference>
<reference key="10">
    <citation type="journal article" date="2010" name="Cell">
        <title>A tissue-specific atlas of mouse protein phosphorylation and expression.</title>
        <authorList>
            <person name="Huttlin E.L."/>
            <person name="Jedrychowski M.P."/>
            <person name="Elias J.E."/>
            <person name="Goswami T."/>
            <person name="Rad R."/>
            <person name="Beausoleil S.A."/>
            <person name="Villen J."/>
            <person name="Haas W."/>
            <person name="Sowa M.E."/>
            <person name="Gygi S.P."/>
        </authorList>
    </citation>
    <scope>IDENTIFICATION BY MASS SPECTROMETRY [LARGE SCALE ANALYSIS]</scope>
    <source>
        <tissue>Brain</tissue>
    </source>
</reference>
<reference key="11">
    <citation type="journal article" date="2011" name="Nat. Med.">
        <title>Death receptor 6 negatively regulates oligodendrocyte survival, maturation and myelination.</title>
        <authorList>
            <person name="Mi S."/>
            <person name="Lee X."/>
            <person name="Hu Y."/>
            <person name="Ji B."/>
            <person name="Shao Z."/>
            <person name="Yang W."/>
            <person name="Huang G."/>
            <person name="Walus L."/>
            <person name="Rhodes K."/>
            <person name="Gong B.J."/>
            <person name="Miller R.H."/>
            <person name="Pepinsky R.B."/>
        </authorList>
    </citation>
    <scope>FUNCTION</scope>
    <scope>DISRUPTION PHENOTYPE</scope>
</reference>
<reference key="12">
    <citation type="journal article" date="2013" name="Cell Death Dis.">
        <title>A DR6/p75(NTR) complex is responsible for beta-amyloid-induced cortical neuron death.</title>
        <authorList>
            <person name="Hu Y."/>
            <person name="Lee X."/>
            <person name="Shao Z."/>
            <person name="Apicco D."/>
            <person name="Huang G."/>
            <person name="Gong B.J."/>
            <person name="Pepinsky R.B."/>
            <person name="Mi S."/>
        </authorList>
    </citation>
    <scope>FUNCTION</scope>
    <scope>DISRUPTION PHENOTYPE</scope>
</reference>
<protein>
    <recommendedName>
        <fullName>Tumor necrosis factor receptor superfamily member 21</fullName>
    </recommendedName>
    <alternativeName>
        <fullName>Death receptor 6</fullName>
    </alternativeName>
    <cdAntigenName>CD358</cdAntigenName>
</protein>
<proteinExistence type="evidence at protein level"/>
<feature type="signal peptide" evidence="3">
    <location>
        <begin position="1"/>
        <end position="41"/>
    </location>
</feature>
<feature type="chain" id="PRO_0000034603" description="Tumor necrosis factor receptor superfamily member 21">
    <location>
        <begin position="42"/>
        <end position="655"/>
    </location>
</feature>
<feature type="topological domain" description="Extracellular" evidence="3">
    <location>
        <begin position="42"/>
        <end position="349"/>
    </location>
</feature>
<feature type="transmembrane region" description="Helical" evidence="3">
    <location>
        <begin position="350"/>
        <end position="370"/>
    </location>
</feature>
<feature type="topological domain" description="Cytoplasmic" evidence="3">
    <location>
        <begin position="371"/>
        <end position="655"/>
    </location>
</feature>
<feature type="repeat" description="TNFR-Cys 1">
    <location>
        <begin position="50"/>
        <end position="88"/>
    </location>
</feature>
<feature type="repeat" description="TNFR-Cys 2">
    <location>
        <begin position="90"/>
        <end position="131"/>
    </location>
</feature>
<feature type="repeat" description="TNFR-Cys 3">
    <location>
        <begin position="133"/>
        <end position="167"/>
    </location>
</feature>
<feature type="repeat" description="TNFR-Cys 4">
    <location>
        <begin position="170"/>
        <end position="211"/>
    </location>
</feature>
<feature type="domain" description="Death" evidence="4">
    <location>
        <begin position="415"/>
        <end position="498"/>
    </location>
</feature>
<feature type="region of interest" description="Disordered" evidence="6">
    <location>
        <begin position="222"/>
        <end position="305"/>
    </location>
</feature>
<feature type="region of interest" description="Disordered" evidence="6">
    <location>
        <begin position="318"/>
        <end position="339"/>
    </location>
</feature>
<feature type="compositionally biased region" description="Polar residues" evidence="6">
    <location>
        <begin position="241"/>
        <end position="262"/>
    </location>
</feature>
<feature type="compositionally biased region" description="Polar residues" evidence="6">
    <location>
        <begin position="276"/>
        <end position="302"/>
    </location>
</feature>
<feature type="compositionally biased region" description="Basic residues" evidence="6">
    <location>
        <begin position="330"/>
        <end position="339"/>
    </location>
</feature>
<feature type="lipid moiety-binding region" description="S-palmitoyl cysteine" evidence="1">
    <location>
        <position position="368"/>
    </location>
</feature>
<feature type="glycosylation site" description="N-linked (GlcNAc...) asparagine" evidence="3">
    <location>
        <position position="82"/>
    </location>
</feature>
<feature type="glycosylation site" description="N-linked (GlcNAc...) asparagine" evidence="3">
    <location>
        <position position="141"/>
    </location>
</feature>
<feature type="glycosylation site" description="N-linked (GlcNAc...) asparagine" evidence="3">
    <location>
        <position position="252"/>
    </location>
</feature>
<feature type="glycosylation site" description="N-linked (GlcNAc...) asparagine" evidence="3">
    <location>
        <position position="257"/>
    </location>
</feature>
<feature type="glycosylation site" description="N-linked (GlcNAc...) asparagine" evidence="3">
    <location>
        <position position="278"/>
    </location>
</feature>
<feature type="glycosylation site" description="N-linked (GlcNAc...) asparagine" evidence="3">
    <location>
        <position position="289"/>
    </location>
</feature>
<feature type="disulfide bond" evidence="5">
    <location>
        <begin position="67"/>
        <end position="80"/>
    </location>
</feature>
<feature type="disulfide bond" evidence="5">
    <location>
        <begin position="70"/>
        <end position="88"/>
    </location>
</feature>
<feature type="disulfide bond" evidence="5">
    <location>
        <begin position="91"/>
        <end position="106"/>
    </location>
</feature>
<feature type="disulfide bond" evidence="5">
    <location>
        <begin position="109"/>
        <end position="123"/>
    </location>
</feature>
<feature type="disulfide bond" evidence="5">
    <location>
        <begin position="113"/>
        <end position="131"/>
    </location>
</feature>
<feature type="disulfide bond" evidence="5">
    <location>
        <begin position="133"/>
        <end position="144"/>
    </location>
</feature>
<feature type="disulfide bond" evidence="5">
    <location>
        <begin position="150"/>
        <end position="168"/>
    </location>
</feature>
<feature type="disulfide bond" evidence="5">
    <location>
        <begin position="171"/>
        <end position="186"/>
    </location>
</feature>
<feature type="disulfide bond" evidence="5">
    <location>
        <begin position="192"/>
        <end position="211"/>
    </location>
</feature>
<feature type="sequence conflict" description="In Ref. 3; BAE22249." evidence="12" ref="3">
    <original>A</original>
    <variation>T</variation>
    <location>
        <position position="93"/>
    </location>
</feature>
<feature type="sequence conflict" description="In Ref. 1; AAG38115." evidence="12" ref="1">
    <original>W</original>
    <variation>L</variation>
    <location>
        <position position="352"/>
    </location>
</feature>
<feature type="sequence conflict" description="In Ref. 4; AAH16420." evidence="12" ref="4">
    <original>M</original>
    <variation>I</variation>
    <location>
        <position position="523"/>
    </location>
</feature>
<feature type="strand" evidence="15">
    <location>
        <begin position="53"/>
        <end position="57"/>
    </location>
</feature>
<feature type="turn" evidence="15">
    <location>
        <begin position="59"/>
        <end position="61"/>
    </location>
</feature>
<feature type="strand" evidence="15">
    <location>
        <begin position="64"/>
        <end position="68"/>
    </location>
</feature>
<feature type="strand" evidence="15">
    <location>
        <begin position="74"/>
        <end position="78"/>
    </location>
</feature>
<feature type="strand" evidence="15">
    <location>
        <begin position="82"/>
        <end position="84"/>
    </location>
</feature>
<feature type="strand" evidence="15">
    <location>
        <begin position="87"/>
        <end position="90"/>
    </location>
</feature>
<feature type="strand" evidence="15">
    <location>
        <begin position="118"/>
        <end position="121"/>
    </location>
</feature>
<feature type="strand" evidence="15">
    <location>
        <begin position="130"/>
        <end position="132"/>
    </location>
</feature>
<feature type="strand" evidence="15">
    <location>
        <begin position="137"/>
        <end position="140"/>
    </location>
</feature>
<feature type="strand" evidence="15">
    <location>
        <begin position="143"/>
        <end position="146"/>
    </location>
</feature>
<feature type="strand" evidence="15">
    <location>
        <begin position="154"/>
        <end position="158"/>
    </location>
</feature>
<feature type="strand" evidence="15">
    <location>
        <begin position="162"/>
        <end position="164"/>
    </location>
</feature>
<feature type="strand" evidence="15">
    <location>
        <begin position="167"/>
        <end position="170"/>
    </location>
</feature>
<feature type="strand" evidence="15">
    <location>
        <begin position="181"/>
        <end position="183"/>
    </location>
</feature>
<feature type="helix" evidence="15">
    <location>
        <begin position="193"/>
        <end position="195"/>
    </location>
</feature>
<feature type="strand" evidence="15">
    <location>
        <begin position="198"/>
        <end position="201"/>
    </location>
</feature>
<feature type="strand" evidence="15">
    <location>
        <begin position="205"/>
        <end position="207"/>
    </location>
</feature>
<feature type="strand" evidence="15">
    <location>
        <begin position="210"/>
        <end position="212"/>
    </location>
</feature>
<accession>Q9EPU5</accession>
<accession>Q3UYG3</accession>
<accession>Q543Y9</accession>
<accession>Q91W77</accession>
<accession>Q91XH9</accession>